<protein>
    <recommendedName>
        <fullName evidence="1">Protein-export protein SecB</fullName>
    </recommendedName>
</protein>
<dbReference type="EMBL" id="AM286690">
    <property type="protein sequence ID" value="CAL17720.1"/>
    <property type="molecule type" value="Genomic_DNA"/>
</dbReference>
<dbReference type="RefSeq" id="WP_011589547.1">
    <property type="nucleotide sequence ID" value="NC_008260.1"/>
</dbReference>
<dbReference type="SMR" id="Q0VM78"/>
<dbReference type="STRING" id="393595.ABO_2272"/>
<dbReference type="KEGG" id="abo:ABO_2272"/>
<dbReference type="eggNOG" id="COG1952">
    <property type="taxonomic scope" value="Bacteria"/>
</dbReference>
<dbReference type="HOGENOM" id="CLU_111574_1_0_6"/>
<dbReference type="OrthoDB" id="9795145at2"/>
<dbReference type="Proteomes" id="UP000008871">
    <property type="component" value="Chromosome"/>
</dbReference>
<dbReference type="GO" id="GO:0005737">
    <property type="term" value="C:cytoplasm"/>
    <property type="evidence" value="ECO:0007669"/>
    <property type="project" value="UniProtKB-SubCell"/>
</dbReference>
<dbReference type="GO" id="GO:0051082">
    <property type="term" value="F:unfolded protein binding"/>
    <property type="evidence" value="ECO:0007669"/>
    <property type="project" value="InterPro"/>
</dbReference>
<dbReference type="GO" id="GO:0006457">
    <property type="term" value="P:protein folding"/>
    <property type="evidence" value="ECO:0007669"/>
    <property type="project" value="UniProtKB-UniRule"/>
</dbReference>
<dbReference type="GO" id="GO:0051262">
    <property type="term" value="P:protein tetramerization"/>
    <property type="evidence" value="ECO:0007669"/>
    <property type="project" value="InterPro"/>
</dbReference>
<dbReference type="GO" id="GO:0015031">
    <property type="term" value="P:protein transport"/>
    <property type="evidence" value="ECO:0007669"/>
    <property type="project" value="UniProtKB-UniRule"/>
</dbReference>
<dbReference type="Gene3D" id="3.10.420.10">
    <property type="entry name" value="SecB-like"/>
    <property type="match status" value="1"/>
</dbReference>
<dbReference type="HAMAP" id="MF_00821">
    <property type="entry name" value="SecB"/>
    <property type="match status" value="1"/>
</dbReference>
<dbReference type="InterPro" id="IPR003708">
    <property type="entry name" value="SecB"/>
</dbReference>
<dbReference type="InterPro" id="IPR035958">
    <property type="entry name" value="SecB-like_sf"/>
</dbReference>
<dbReference type="NCBIfam" id="NF004393">
    <property type="entry name" value="PRK05751.1-4"/>
    <property type="match status" value="1"/>
</dbReference>
<dbReference type="NCBIfam" id="TIGR00809">
    <property type="entry name" value="secB"/>
    <property type="match status" value="1"/>
</dbReference>
<dbReference type="PANTHER" id="PTHR36918">
    <property type="match status" value="1"/>
</dbReference>
<dbReference type="PANTHER" id="PTHR36918:SF1">
    <property type="entry name" value="PROTEIN-EXPORT PROTEIN SECB"/>
    <property type="match status" value="1"/>
</dbReference>
<dbReference type="Pfam" id="PF02556">
    <property type="entry name" value="SecB"/>
    <property type="match status" value="1"/>
</dbReference>
<dbReference type="PRINTS" id="PR01594">
    <property type="entry name" value="SECBCHAPRONE"/>
</dbReference>
<dbReference type="SUPFAM" id="SSF54611">
    <property type="entry name" value="SecB-like"/>
    <property type="match status" value="1"/>
</dbReference>
<proteinExistence type="inferred from homology"/>
<evidence type="ECO:0000255" key="1">
    <source>
        <dbReference type="HAMAP-Rule" id="MF_00821"/>
    </source>
</evidence>
<keyword id="KW-0143">Chaperone</keyword>
<keyword id="KW-0963">Cytoplasm</keyword>
<keyword id="KW-0653">Protein transport</keyword>
<keyword id="KW-1185">Reference proteome</keyword>
<keyword id="KW-0811">Translocation</keyword>
<keyword id="KW-0813">Transport</keyword>
<sequence length="157" mass="17664">MADEQQQVFQLQRIYLKDTSFECPGAPEVFLQEWKPKVNVQLNNSARRVGEGDEFEVEITVTVTAKDEAEEKTFYLVEVKQAGIFTVKGIDGEERAQLLGAYCPNLLFPYVREVVSDLVAKGSFPQMVLQPINFDALYQQQRDQQQGNAAAAGETVQ</sequence>
<organism>
    <name type="scientific">Alcanivorax borkumensis (strain ATCC 700651 / DSM 11573 / NCIMB 13689 / SK2)</name>
    <dbReference type="NCBI Taxonomy" id="393595"/>
    <lineage>
        <taxon>Bacteria</taxon>
        <taxon>Pseudomonadati</taxon>
        <taxon>Pseudomonadota</taxon>
        <taxon>Gammaproteobacteria</taxon>
        <taxon>Oceanospirillales</taxon>
        <taxon>Alcanivoracaceae</taxon>
        <taxon>Alcanivorax</taxon>
    </lineage>
</organism>
<name>SECB_ALCBS</name>
<feature type="chain" id="PRO_1000062450" description="Protein-export protein SecB">
    <location>
        <begin position="1"/>
        <end position="157"/>
    </location>
</feature>
<comment type="function">
    <text evidence="1">One of the proteins required for the normal export of preproteins out of the cell cytoplasm. It is a molecular chaperone that binds to a subset of precursor proteins, maintaining them in a translocation-competent state. It also specifically binds to its receptor SecA.</text>
</comment>
<comment type="subunit">
    <text evidence="1">Homotetramer, a dimer of dimers. One homotetramer interacts with 1 SecA dimer.</text>
</comment>
<comment type="subcellular location">
    <subcellularLocation>
        <location evidence="1">Cytoplasm</location>
    </subcellularLocation>
</comment>
<comment type="similarity">
    <text evidence="1">Belongs to the SecB family.</text>
</comment>
<reference key="1">
    <citation type="journal article" date="2006" name="Nat. Biotechnol.">
        <title>Genome sequence of the ubiquitous hydrocarbon-degrading marine bacterium Alcanivorax borkumensis.</title>
        <authorList>
            <person name="Schneiker S."/>
            <person name="Martins dos Santos V.A.P."/>
            <person name="Bartels D."/>
            <person name="Bekel T."/>
            <person name="Brecht M."/>
            <person name="Buhrmester J."/>
            <person name="Chernikova T.N."/>
            <person name="Denaro R."/>
            <person name="Ferrer M."/>
            <person name="Gertler C."/>
            <person name="Goesmann A."/>
            <person name="Golyshina O.V."/>
            <person name="Kaminski F."/>
            <person name="Khachane A.N."/>
            <person name="Lang S."/>
            <person name="Linke B."/>
            <person name="McHardy A.C."/>
            <person name="Meyer F."/>
            <person name="Nechitaylo T."/>
            <person name="Puehler A."/>
            <person name="Regenhardt D."/>
            <person name="Rupp O."/>
            <person name="Sabirova J.S."/>
            <person name="Selbitschka W."/>
            <person name="Yakimov M.M."/>
            <person name="Timmis K.N."/>
            <person name="Vorhoelter F.-J."/>
            <person name="Weidner S."/>
            <person name="Kaiser O."/>
            <person name="Golyshin P.N."/>
        </authorList>
    </citation>
    <scope>NUCLEOTIDE SEQUENCE [LARGE SCALE GENOMIC DNA]</scope>
    <source>
        <strain>ATCC 700651 / DSM 11573 / NCIMB 13689 / SK2</strain>
    </source>
</reference>
<gene>
    <name evidence="1" type="primary">secB</name>
    <name type="ordered locus">ABO_2272</name>
</gene>
<accession>Q0VM78</accession>